<evidence type="ECO:0000255" key="1">
    <source>
        <dbReference type="HAMAP-Rule" id="MF_01696"/>
    </source>
</evidence>
<gene>
    <name evidence="1" type="primary">mshB</name>
    <name type="ordered locus">Tcur_1131</name>
</gene>
<keyword id="KW-0378">Hydrolase</keyword>
<keyword id="KW-0479">Metal-binding</keyword>
<keyword id="KW-1185">Reference proteome</keyword>
<keyword id="KW-0862">Zinc</keyword>
<dbReference type="EC" id="3.5.1.103" evidence="1"/>
<dbReference type="EMBL" id="CP001738">
    <property type="protein sequence ID" value="ACY96716.1"/>
    <property type="molecule type" value="Genomic_DNA"/>
</dbReference>
<dbReference type="RefSeq" id="WP_012851500.1">
    <property type="nucleotide sequence ID" value="NC_013510.1"/>
</dbReference>
<dbReference type="SMR" id="D1A8M1"/>
<dbReference type="STRING" id="471852.Tcur_1131"/>
<dbReference type="KEGG" id="tcu:Tcur_1131"/>
<dbReference type="eggNOG" id="COG2120">
    <property type="taxonomic scope" value="Bacteria"/>
</dbReference>
<dbReference type="HOGENOM" id="CLU_049311_2_1_11"/>
<dbReference type="OrthoDB" id="158614at2"/>
<dbReference type="Proteomes" id="UP000001918">
    <property type="component" value="Chromosome"/>
</dbReference>
<dbReference type="GO" id="GO:0035595">
    <property type="term" value="F:N-acetylglucosaminylinositol deacetylase activity"/>
    <property type="evidence" value="ECO:0007669"/>
    <property type="project" value="UniProtKB-EC"/>
</dbReference>
<dbReference type="GO" id="GO:0008270">
    <property type="term" value="F:zinc ion binding"/>
    <property type="evidence" value="ECO:0007669"/>
    <property type="project" value="UniProtKB-UniRule"/>
</dbReference>
<dbReference type="GO" id="GO:0010125">
    <property type="term" value="P:mycothiol biosynthetic process"/>
    <property type="evidence" value="ECO:0007669"/>
    <property type="project" value="UniProtKB-UniRule"/>
</dbReference>
<dbReference type="Gene3D" id="3.40.50.10320">
    <property type="entry name" value="LmbE-like"/>
    <property type="match status" value="1"/>
</dbReference>
<dbReference type="HAMAP" id="MF_01696">
    <property type="entry name" value="MshB"/>
    <property type="match status" value="1"/>
</dbReference>
<dbReference type="InterPro" id="IPR003737">
    <property type="entry name" value="GlcNAc_PI_deacetylase-related"/>
</dbReference>
<dbReference type="InterPro" id="IPR024078">
    <property type="entry name" value="LmbE-like_dom_sf"/>
</dbReference>
<dbReference type="InterPro" id="IPR017810">
    <property type="entry name" value="Mycothiol_biosynthesis_MshB"/>
</dbReference>
<dbReference type="NCBIfam" id="TIGR03445">
    <property type="entry name" value="mycothiol_MshB"/>
    <property type="match status" value="1"/>
</dbReference>
<dbReference type="PANTHER" id="PTHR12993:SF26">
    <property type="entry name" value="1D-MYO-INOSITOL 2-ACETAMIDO-2-DEOXY-ALPHA-D-GLUCOPYRANOSIDE DEACETYLASE"/>
    <property type="match status" value="1"/>
</dbReference>
<dbReference type="PANTHER" id="PTHR12993">
    <property type="entry name" value="N-ACETYLGLUCOSAMINYL-PHOSPHATIDYLINOSITOL DE-N-ACETYLASE-RELATED"/>
    <property type="match status" value="1"/>
</dbReference>
<dbReference type="Pfam" id="PF02585">
    <property type="entry name" value="PIG-L"/>
    <property type="match status" value="1"/>
</dbReference>
<dbReference type="SUPFAM" id="SSF102588">
    <property type="entry name" value="LmbE-like"/>
    <property type="match status" value="1"/>
</dbReference>
<feature type="chain" id="PRO_0000400232" description="1D-myo-inositol 2-acetamido-2-deoxy-alpha-D-glucopyranoside deacetylase">
    <location>
        <begin position="1"/>
        <end position="297"/>
    </location>
</feature>
<feature type="binding site" evidence="1">
    <location>
        <position position="14"/>
    </location>
    <ligand>
        <name>Zn(2+)</name>
        <dbReference type="ChEBI" id="CHEBI:29105"/>
    </ligand>
</feature>
<feature type="binding site" evidence="1">
    <location>
        <position position="17"/>
    </location>
    <ligand>
        <name>Zn(2+)</name>
        <dbReference type="ChEBI" id="CHEBI:29105"/>
    </ligand>
</feature>
<feature type="binding site" evidence="1">
    <location>
        <position position="149"/>
    </location>
    <ligand>
        <name>Zn(2+)</name>
        <dbReference type="ChEBI" id="CHEBI:29105"/>
    </ligand>
</feature>
<accession>D1A8M1</accession>
<comment type="function">
    <text evidence="1">Catalyzes the deacetylation of 1D-myo-inositol 2-acetamido-2-deoxy-alpha-D-glucopyranoside (GlcNAc-Ins) in the mycothiol biosynthesis pathway.</text>
</comment>
<comment type="catalytic activity">
    <reaction evidence="1">
        <text>1D-myo-inositol 2-acetamido-2-deoxy-alpha-D-glucopyranoside + H2O = 1D-myo-inositol 2-amino-2-deoxy-alpha-D-glucopyranoside + acetate</text>
        <dbReference type="Rhea" id="RHEA:26180"/>
        <dbReference type="ChEBI" id="CHEBI:15377"/>
        <dbReference type="ChEBI" id="CHEBI:30089"/>
        <dbReference type="ChEBI" id="CHEBI:52442"/>
        <dbReference type="ChEBI" id="CHEBI:58886"/>
        <dbReference type="EC" id="3.5.1.103"/>
    </reaction>
</comment>
<comment type="cofactor">
    <cofactor evidence="1">
        <name>Zn(2+)</name>
        <dbReference type="ChEBI" id="CHEBI:29105"/>
    </cofactor>
    <text evidence="1">Binds 1 zinc ion per subunit.</text>
</comment>
<comment type="similarity">
    <text evidence="1">Belongs to the MshB deacetylase family.</text>
</comment>
<organism>
    <name type="scientific">Thermomonospora curvata (strain ATCC 19995 / DSM 43183 / JCM 3096 / KCTC 9072 / NBRC 15933 / NCIMB 10081 / Henssen B9)</name>
    <dbReference type="NCBI Taxonomy" id="471852"/>
    <lineage>
        <taxon>Bacteria</taxon>
        <taxon>Bacillati</taxon>
        <taxon>Actinomycetota</taxon>
        <taxon>Actinomycetes</taxon>
        <taxon>Streptosporangiales</taxon>
        <taxon>Thermomonosporaceae</taxon>
        <taxon>Thermomonospora</taxon>
    </lineage>
</organism>
<protein>
    <recommendedName>
        <fullName evidence="1">1D-myo-inositol 2-acetamido-2-deoxy-alpha-D-glucopyranoside deacetylase</fullName>
        <shortName evidence="1">GlcNAc-Ins deacetylase</shortName>
        <ecNumber evidence="1">3.5.1.103</ecNumber>
    </recommendedName>
    <alternativeName>
        <fullName>N-acetyl-1-D-myo-inositol 2-amino-2-deoxy-alpha-D-glucopyranoside deacetylase</fullName>
    </alternativeName>
</protein>
<reference key="1">
    <citation type="journal article" date="2011" name="Stand. Genomic Sci.">
        <title>Complete genome sequence of Thermomonospora curvata type strain (B9).</title>
        <authorList>
            <person name="Chertkov O."/>
            <person name="Sikorski J."/>
            <person name="Nolan M."/>
            <person name="Lapidus A."/>
            <person name="Lucas S."/>
            <person name="Del Rio T.G."/>
            <person name="Tice H."/>
            <person name="Cheng J.F."/>
            <person name="Goodwin L."/>
            <person name="Pitluck S."/>
            <person name="Liolios K."/>
            <person name="Ivanova N."/>
            <person name="Mavromatis K."/>
            <person name="Mikhailova N."/>
            <person name="Ovchinnikova G."/>
            <person name="Pati A."/>
            <person name="Chen A."/>
            <person name="Palaniappan K."/>
            <person name="Djao O.D."/>
            <person name="Land M."/>
            <person name="Hauser L."/>
            <person name="Chang Y.J."/>
            <person name="Jeffries C.D."/>
            <person name="Brettin T."/>
            <person name="Han C."/>
            <person name="Detter J.C."/>
            <person name="Rohde M."/>
            <person name="Goeker M."/>
            <person name="Woyke T."/>
            <person name="Bristow J."/>
            <person name="Eisen J.A."/>
            <person name="Markowitz V."/>
            <person name="Hugenholtz P."/>
            <person name="Klenk H.P."/>
            <person name="Kyrpides N.C."/>
        </authorList>
    </citation>
    <scope>NUCLEOTIDE SEQUENCE [LARGE SCALE GENOMIC DNA]</scope>
    <source>
        <strain>ATCC 19995 / DSM 43183 / JCM 3096 / KCTC 9072 / NBRC 15933 / NCIMB 10081 / Henssen B9</strain>
    </source>
</reference>
<sequence>MSDTDRRILFVHAHPDDESISTGATMAKYAAEGAHVCLVTCTLGEEGEIIPEELRHLASDKEDRLGEFRIGELKEACAALGVTDHRFLGGAGRWRDSGMMGAPSNDHPRCFWRADVEEAARLLAEIIREVRPQVIVTYDEHGHYGHPDHIQAHRVTVRARELAADPAHGEGEPWSAAKLYATATPRTVLARSIALMRDSRHPFERVSSIDQLGYGVPDDQVTTVVDARAHLPAKLAALRAHRTQVVVASEGPFFALSNNIGQQAFGAEYYTLLDGPRGPAVADGRESGLFSGLPGLE</sequence>
<proteinExistence type="inferred from homology"/>
<name>MSHB_THECD</name>